<evidence type="ECO:0000250" key="1"/>
<evidence type="ECO:0000256" key="2">
    <source>
        <dbReference type="SAM" id="MobiDB-lite"/>
    </source>
</evidence>
<evidence type="ECO:0000305" key="3"/>
<dbReference type="EMBL" id="AAHF01000006">
    <property type="protein sequence ID" value="EAL89087.1"/>
    <property type="molecule type" value="Genomic_DNA"/>
</dbReference>
<dbReference type="RefSeq" id="XP_751125.1">
    <property type="nucleotide sequence ID" value="XM_746032.1"/>
</dbReference>
<dbReference type="SMR" id="Q4WLS7"/>
<dbReference type="FunCoup" id="Q4WLS7">
    <property type="interactions" value="260"/>
</dbReference>
<dbReference type="STRING" id="330879.Q4WLS7"/>
<dbReference type="EnsemblFungi" id="EAL89087">
    <property type="protein sequence ID" value="EAL89087"/>
    <property type="gene ID" value="AFUA_6G12470"/>
</dbReference>
<dbReference type="GeneID" id="3508432"/>
<dbReference type="KEGG" id="afm:AFUA_6G12470"/>
<dbReference type="VEuPathDB" id="FungiDB:Afu6g12470"/>
<dbReference type="eggNOG" id="KOG3758">
    <property type="taxonomic scope" value="Eukaryota"/>
</dbReference>
<dbReference type="HOGENOM" id="CLU_011361_1_0_1"/>
<dbReference type="InParanoid" id="Q4WLS7"/>
<dbReference type="OMA" id="HSCLDFF"/>
<dbReference type="OrthoDB" id="272987at2759"/>
<dbReference type="Proteomes" id="UP000002530">
    <property type="component" value="Chromosome 6"/>
</dbReference>
<dbReference type="GO" id="GO:0000139">
    <property type="term" value="C:Golgi membrane"/>
    <property type="evidence" value="ECO:0007669"/>
    <property type="project" value="UniProtKB-SubCell"/>
</dbReference>
<dbReference type="GO" id="GO:0017119">
    <property type="term" value="C:Golgi transport complex"/>
    <property type="evidence" value="ECO:0000318"/>
    <property type="project" value="GO_Central"/>
</dbReference>
<dbReference type="GO" id="GO:0006891">
    <property type="term" value="P:intra-Golgi vesicle-mediated transport"/>
    <property type="evidence" value="ECO:0000318"/>
    <property type="project" value="GO_Central"/>
</dbReference>
<dbReference type="GO" id="GO:0015031">
    <property type="term" value="P:protein transport"/>
    <property type="evidence" value="ECO:0007669"/>
    <property type="project" value="UniProtKB-KW"/>
</dbReference>
<dbReference type="InterPro" id="IPR010490">
    <property type="entry name" value="COG6"/>
</dbReference>
<dbReference type="InterPro" id="IPR048369">
    <property type="entry name" value="COG6_C"/>
</dbReference>
<dbReference type="InterPro" id="IPR048368">
    <property type="entry name" value="COG6_N"/>
</dbReference>
<dbReference type="PANTHER" id="PTHR21506">
    <property type="entry name" value="COMPONENT OF OLIGOMERIC GOLGI COMPLEX 6"/>
    <property type="match status" value="1"/>
</dbReference>
<dbReference type="PANTHER" id="PTHR21506:SF0">
    <property type="entry name" value="CONSERVED OLIGOMERIC GOLGI COMPLEX SUBUNIT 6"/>
    <property type="match status" value="1"/>
</dbReference>
<dbReference type="Pfam" id="PF20653">
    <property type="entry name" value="COG6_C"/>
    <property type="match status" value="1"/>
</dbReference>
<dbReference type="Pfam" id="PF06419">
    <property type="entry name" value="COG6_N"/>
    <property type="match status" value="1"/>
</dbReference>
<dbReference type="SMART" id="SM01087">
    <property type="entry name" value="COG6"/>
    <property type="match status" value="1"/>
</dbReference>
<reference key="1">
    <citation type="journal article" date="2005" name="Nature">
        <title>Genomic sequence of the pathogenic and allergenic filamentous fungus Aspergillus fumigatus.</title>
        <authorList>
            <person name="Nierman W.C."/>
            <person name="Pain A."/>
            <person name="Anderson M.J."/>
            <person name="Wortman J.R."/>
            <person name="Kim H.S."/>
            <person name="Arroyo J."/>
            <person name="Berriman M."/>
            <person name="Abe K."/>
            <person name="Archer D.B."/>
            <person name="Bermejo C."/>
            <person name="Bennett J.W."/>
            <person name="Bowyer P."/>
            <person name="Chen D."/>
            <person name="Collins M."/>
            <person name="Coulsen R."/>
            <person name="Davies R."/>
            <person name="Dyer P.S."/>
            <person name="Farman M.L."/>
            <person name="Fedorova N."/>
            <person name="Fedorova N.D."/>
            <person name="Feldblyum T.V."/>
            <person name="Fischer R."/>
            <person name="Fosker N."/>
            <person name="Fraser A."/>
            <person name="Garcia J.L."/>
            <person name="Garcia M.J."/>
            <person name="Goble A."/>
            <person name="Goldman G.H."/>
            <person name="Gomi K."/>
            <person name="Griffith-Jones S."/>
            <person name="Gwilliam R."/>
            <person name="Haas B.J."/>
            <person name="Haas H."/>
            <person name="Harris D.E."/>
            <person name="Horiuchi H."/>
            <person name="Huang J."/>
            <person name="Humphray S."/>
            <person name="Jimenez J."/>
            <person name="Keller N."/>
            <person name="Khouri H."/>
            <person name="Kitamoto K."/>
            <person name="Kobayashi T."/>
            <person name="Konzack S."/>
            <person name="Kulkarni R."/>
            <person name="Kumagai T."/>
            <person name="Lafton A."/>
            <person name="Latge J.-P."/>
            <person name="Li W."/>
            <person name="Lord A."/>
            <person name="Lu C."/>
            <person name="Majoros W.H."/>
            <person name="May G.S."/>
            <person name="Miller B.L."/>
            <person name="Mohamoud Y."/>
            <person name="Molina M."/>
            <person name="Monod M."/>
            <person name="Mouyna I."/>
            <person name="Mulligan S."/>
            <person name="Murphy L.D."/>
            <person name="O'Neil S."/>
            <person name="Paulsen I."/>
            <person name="Penalva M.A."/>
            <person name="Pertea M."/>
            <person name="Price C."/>
            <person name="Pritchard B.L."/>
            <person name="Quail M.A."/>
            <person name="Rabbinowitsch E."/>
            <person name="Rawlins N."/>
            <person name="Rajandream M.A."/>
            <person name="Reichard U."/>
            <person name="Renauld H."/>
            <person name="Robson G.D."/>
            <person name="Rodriguez de Cordoba S."/>
            <person name="Rodriguez-Pena J.M."/>
            <person name="Ronning C.M."/>
            <person name="Rutter S."/>
            <person name="Salzberg S.L."/>
            <person name="Sanchez M."/>
            <person name="Sanchez-Ferrero J.C."/>
            <person name="Saunders D."/>
            <person name="Seeger K."/>
            <person name="Squares R."/>
            <person name="Squares S."/>
            <person name="Takeuchi M."/>
            <person name="Tekaia F."/>
            <person name="Turner G."/>
            <person name="Vazquez de Aldana C.R."/>
            <person name="Weidman J."/>
            <person name="White O."/>
            <person name="Woodward J.R."/>
            <person name="Yu J.-H."/>
            <person name="Fraser C.M."/>
            <person name="Galagan J.E."/>
            <person name="Asai K."/>
            <person name="Machida M."/>
            <person name="Hall N."/>
            <person name="Barrell B.G."/>
            <person name="Denning D.W."/>
        </authorList>
    </citation>
    <scope>NUCLEOTIDE SEQUENCE [LARGE SCALE GENOMIC DNA]</scope>
    <source>
        <strain>ATCC MYA-4609 / CBS 101355 / FGSC A1100 / Af293</strain>
    </source>
</reference>
<keyword id="KW-0333">Golgi apparatus</keyword>
<keyword id="KW-0472">Membrane</keyword>
<keyword id="KW-0653">Protein transport</keyword>
<keyword id="KW-1185">Reference proteome</keyword>
<keyword id="KW-0813">Transport</keyword>
<feature type="chain" id="PRO_0000339313" description="Conserved oligomeric Golgi complex subunit 6">
    <location>
        <begin position="1"/>
        <end position="752"/>
    </location>
</feature>
<feature type="region of interest" description="Disordered" evidence="2">
    <location>
        <begin position="600"/>
        <end position="620"/>
    </location>
</feature>
<feature type="region of interest" description="Disordered" evidence="2">
    <location>
        <begin position="709"/>
        <end position="736"/>
    </location>
</feature>
<feature type="compositionally biased region" description="Basic and acidic residues" evidence="2">
    <location>
        <begin position="725"/>
        <end position="736"/>
    </location>
</feature>
<comment type="function">
    <text evidence="1">Acts as a component of the peripheral membrane COG complex that is involved in intra-Golgi protein trafficking. COG is located at the cis-Golgi, and regulates tethering of retrograde intra-Golgi vesicles and possibly a number of other membrane trafficking events (By similarity).</text>
</comment>
<comment type="subcellular location">
    <subcellularLocation>
        <location evidence="1">Golgi apparatus membrane</location>
        <topology evidence="1">Peripheral membrane protein</topology>
    </subcellularLocation>
</comment>
<comment type="similarity">
    <text evidence="3">Belongs to the COG6 family.</text>
</comment>
<proteinExistence type="inferred from homology"/>
<accession>Q4WLS7</accession>
<sequence>MESYFPSGAIANHSFIRASSPASTPLSPPTQRSNALSNRLTSVLSASYADSDIRDALETLSLRGVHNTAETRRQLRLDVQKEVVECNAEIVRDFGKVAEQLQRIGTVISSLNQTCEEMRQHIVRAKQDTAPVIEEASALMNQKKESETKQQLLDAFVKHFIVSEDDLLVLTSAEEPIDDRFFNVLDRVKQVHHDCEVLLGGENQRLGLELMEKSSRNLNSAYQKLFRWIQKKFKSLNLEDPRISSSIRRALRVLAERPSLFHSCLDFFADARDYALSDAFHYALTDTVSGSGGDRNVKPIEFSAHDPLRYVGDMLAWVHSTTVSEREALEALFVADGEEIAKGIQAGLSSEPWSRIDEGEEVSFDGRKALNDLVNRDLVGVSRALRQRIELVIQGHDEPVTCYKVVHLLSFYRATFSRLLGTKSNLADMMQTLEKFTFSRFESLMLEQVNTLSNDHAALTPPDDLSAPEFFLDALEELTSLMKTHDASLEAEDAESESTAENKFTPVLRVAFDPFLQLAKSSAAELPDATARAIYTTNVLLTARSTISAFAFASATHMDPISTALSSLRMELLEIQHRYLLDASGLGVLLTALEPFAPSPTISKPESEGKDGHAPPQVDKQPTDIAEIADLPAFQPEALIAVGQQLDDFLPSALMDATDNLKHLQSASFVQSVTEEAVEAFCRDFEFVEGMIIGADEARGRVHIKRMEDGSDAGVQDDVATESGKVSDGDEQESKLRRLFPRTTGEIRVLLS</sequence>
<name>COG6_ASPFU</name>
<organism>
    <name type="scientific">Aspergillus fumigatus (strain ATCC MYA-4609 / CBS 101355 / FGSC A1100 / Af293)</name>
    <name type="common">Neosartorya fumigata</name>
    <dbReference type="NCBI Taxonomy" id="330879"/>
    <lineage>
        <taxon>Eukaryota</taxon>
        <taxon>Fungi</taxon>
        <taxon>Dikarya</taxon>
        <taxon>Ascomycota</taxon>
        <taxon>Pezizomycotina</taxon>
        <taxon>Eurotiomycetes</taxon>
        <taxon>Eurotiomycetidae</taxon>
        <taxon>Eurotiales</taxon>
        <taxon>Aspergillaceae</taxon>
        <taxon>Aspergillus</taxon>
        <taxon>Aspergillus subgen. Fumigati</taxon>
    </lineage>
</organism>
<gene>
    <name type="primary">cog6</name>
    <name type="ORF">AFUA_6G12470</name>
</gene>
<protein>
    <recommendedName>
        <fullName>Conserved oligomeric Golgi complex subunit 6</fullName>
        <shortName>COG complex subunit 6</shortName>
    </recommendedName>
    <alternativeName>
        <fullName>Component of oligomeric Golgi complex 6</fullName>
    </alternativeName>
</protein>